<accession>Q9BV87</accession>
<accession>B2RC77</accession>
<accession>O75548</accession>
<accession>Q9H4N0</accession>
<accession>Q9UQN0</accession>
<proteinExistence type="evidence at protein level"/>
<gene>
    <name type="primary">CNPPD1</name>
    <name type="synonym">C2orf24</name>
    <name type="ORF">CDABP0125</name>
    <name type="ORF">CGI-57</name>
</gene>
<keyword id="KW-0472">Membrane</keyword>
<keyword id="KW-1267">Proteomics identification</keyword>
<keyword id="KW-1185">Reference proteome</keyword>
<keyword id="KW-0812">Transmembrane</keyword>
<keyword id="KW-1133">Transmembrane helix</keyword>
<organism>
    <name type="scientific">Homo sapiens</name>
    <name type="common">Human</name>
    <dbReference type="NCBI Taxonomy" id="9606"/>
    <lineage>
        <taxon>Eukaryota</taxon>
        <taxon>Metazoa</taxon>
        <taxon>Chordata</taxon>
        <taxon>Craniata</taxon>
        <taxon>Vertebrata</taxon>
        <taxon>Euteleostomi</taxon>
        <taxon>Mammalia</taxon>
        <taxon>Eutheria</taxon>
        <taxon>Euarchontoglires</taxon>
        <taxon>Primates</taxon>
        <taxon>Haplorrhini</taxon>
        <taxon>Catarrhini</taxon>
        <taxon>Hominidae</taxon>
        <taxon>Homo</taxon>
    </lineage>
</organism>
<name>CNPD1_HUMAN</name>
<evidence type="ECO:0000255" key="1"/>
<evidence type="ECO:0000269" key="2">
    <source>
    </source>
</evidence>
<evidence type="ECO:0000269" key="3">
    <source>
    </source>
</evidence>
<evidence type="ECO:0000269" key="4">
    <source>
    </source>
</evidence>
<evidence type="ECO:0000269" key="5">
    <source ref="2"/>
</evidence>
<evidence type="ECO:0000269" key="6">
    <source ref="4"/>
</evidence>
<evidence type="ECO:0000305" key="7"/>
<reference key="1">
    <citation type="journal article" date="2000" name="Genome Res.">
        <title>Identification of novel human genes evolutionarily conserved in Caenorhabditis elegans by comparative proteomics.</title>
        <authorList>
            <person name="Lai C.-H."/>
            <person name="Chou C.-Y."/>
            <person name="Ch'ang L.-Y."/>
            <person name="Liu C.-S."/>
            <person name="Lin W.-C."/>
        </authorList>
    </citation>
    <scope>NUCLEOTIDE SEQUENCE [LARGE SCALE MRNA]</scope>
    <scope>VARIANTS THR-262; PRO-292 AND PRO-383</scope>
</reference>
<reference key="2">
    <citation type="submission" date="2000-07" db="EMBL/GenBank/DDBJ databases">
        <title>Pediatric leukemia cDNA sequencing project.</title>
        <authorList>
            <person name="Zhou J."/>
            <person name="Yu W."/>
            <person name="Tang H."/>
            <person name="Mei G."/>
            <person name="Tsang Y.T.M."/>
            <person name="Bouck J."/>
            <person name="Gibbs R.A."/>
            <person name="Margolin J.F."/>
        </authorList>
    </citation>
    <scope>NUCLEOTIDE SEQUENCE [LARGE SCALE MRNA]</scope>
    <scope>VARIANT PRO-383</scope>
    <source>
        <tissue>Leukemia</tissue>
    </source>
</reference>
<reference key="3">
    <citation type="journal article" date="2004" name="Nat. Genet.">
        <title>Complete sequencing and characterization of 21,243 full-length human cDNAs.</title>
        <authorList>
            <person name="Ota T."/>
            <person name="Suzuki Y."/>
            <person name="Nishikawa T."/>
            <person name="Otsuki T."/>
            <person name="Sugiyama T."/>
            <person name="Irie R."/>
            <person name="Wakamatsu A."/>
            <person name="Hayashi K."/>
            <person name="Sato H."/>
            <person name="Nagai K."/>
            <person name="Kimura K."/>
            <person name="Makita H."/>
            <person name="Sekine M."/>
            <person name="Obayashi M."/>
            <person name="Nishi T."/>
            <person name="Shibahara T."/>
            <person name="Tanaka T."/>
            <person name="Ishii S."/>
            <person name="Yamamoto J."/>
            <person name="Saito K."/>
            <person name="Kawai Y."/>
            <person name="Isono Y."/>
            <person name="Nakamura Y."/>
            <person name="Nagahari K."/>
            <person name="Murakami K."/>
            <person name="Yasuda T."/>
            <person name="Iwayanagi T."/>
            <person name="Wagatsuma M."/>
            <person name="Shiratori A."/>
            <person name="Sudo H."/>
            <person name="Hosoiri T."/>
            <person name="Kaku Y."/>
            <person name="Kodaira H."/>
            <person name="Kondo H."/>
            <person name="Sugawara M."/>
            <person name="Takahashi M."/>
            <person name="Kanda K."/>
            <person name="Yokoi T."/>
            <person name="Furuya T."/>
            <person name="Kikkawa E."/>
            <person name="Omura Y."/>
            <person name="Abe K."/>
            <person name="Kamihara K."/>
            <person name="Katsuta N."/>
            <person name="Sato K."/>
            <person name="Tanikawa M."/>
            <person name="Yamazaki M."/>
            <person name="Ninomiya K."/>
            <person name="Ishibashi T."/>
            <person name="Yamashita H."/>
            <person name="Murakawa K."/>
            <person name="Fujimori K."/>
            <person name="Tanai H."/>
            <person name="Kimata M."/>
            <person name="Watanabe M."/>
            <person name="Hiraoka S."/>
            <person name="Chiba Y."/>
            <person name="Ishida S."/>
            <person name="Ono Y."/>
            <person name="Takiguchi S."/>
            <person name="Watanabe S."/>
            <person name="Yosida M."/>
            <person name="Hotuta T."/>
            <person name="Kusano J."/>
            <person name="Kanehori K."/>
            <person name="Takahashi-Fujii A."/>
            <person name="Hara H."/>
            <person name="Tanase T.-O."/>
            <person name="Nomura Y."/>
            <person name="Togiya S."/>
            <person name="Komai F."/>
            <person name="Hara R."/>
            <person name="Takeuchi K."/>
            <person name="Arita M."/>
            <person name="Imose N."/>
            <person name="Musashino K."/>
            <person name="Yuuki H."/>
            <person name="Oshima A."/>
            <person name="Sasaki N."/>
            <person name="Aotsuka S."/>
            <person name="Yoshikawa Y."/>
            <person name="Matsunawa H."/>
            <person name="Ichihara T."/>
            <person name="Shiohata N."/>
            <person name="Sano S."/>
            <person name="Moriya S."/>
            <person name="Momiyama H."/>
            <person name="Satoh N."/>
            <person name="Takami S."/>
            <person name="Terashima Y."/>
            <person name="Suzuki O."/>
            <person name="Nakagawa S."/>
            <person name="Senoh A."/>
            <person name="Mizoguchi H."/>
            <person name="Goto Y."/>
            <person name="Shimizu F."/>
            <person name="Wakebe H."/>
            <person name="Hishigaki H."/>
            <person name="Watanabe T."/>
            <person name="Sugiyama A."/>
            <person name="Takemoto M."/>
            <person name="Kawakami B."/>
            <person name="Yamazaki M."/>
            <person name="Watanabe K."/>
            <person name="Kumagai A."/>
            <person name="Itakura S."/>
            <person name="Fukuzumi Y."/>
            <person name="Fujimori Y."/>
            <person name="Komiyama M."/>
            <person name="Tashiro H."/>
            <person name="Tanigami A."/>
            <person name="Fujiwara T."/>
            <person name="Ono T."/>
            <person name="Yamada K."/>
            <person name="Fujii Y."/>
            <person name="Ozaki K."/>
            <person name="Hirao M."/>
            <person name="Ohmori Y."/>
            <person name="Kawabata A."/>
            <person name="Hikiji T."/>
            <person name="Kobatake N."/>
            <person name="Inagaki H."/>
            <person name="Ikema Y."/>
            <person name="Okamoto S."/>
            <person name="Okitani R."/>
            <person name="Kawakami T."/>
            <person name="Noguchi S."/>
            <person name="Itoh T."/>
            <person name="Shigeta K."/>
            <person name="Senba T."/>
            <person name="Matsumura K."/>
            <person name="Nakajima Y."/>
            <person name="Mizuno T."/>
            <person name="Morinaga M."/>
            <person name="Sasaki M."/>
            <person name="Togashi T."/>
            <person name="Oyama M."/>
            <person name="Hata H."/>
            <person name="Watanabe M."/>
            <person name="Komatsu T."/>
            <person name="Mizushima-Sugano J."/>
            <person name="Satoh T."/>
            <person name="Shirai Y."/>
            <person name="Takahashi Y."/>
            <person name="Nakagawa K."/>
            <person name="Okumura K."/>
            <person name="Nagase T."/>
            <person name="Nomura N."/>
            <person name="Kikuchi H."/>
            <person name="Masuho Y."/>
            <person name="Yamashita R."/>
            <person name="Nakai K."/>
            <person name="Yada T."/>
            <person name="Nakamura Y."/>
            <person name="Ohara O."/>
            <person name="Isogai T."/>
            <person name="Sugano S."/>
        </authorList>
    </citation>
    <scope>NUCLEOTIDE SEQUENCE [LARGE SCALE MRNA]</scope>
    <scope>VARIANTS THR-262; PRO-292 AND PRO-383</scope>
    <source>
        <tissue>Cervix</tissue>
    </source>
</reference>
<reference key="4">
    <citation type="submission" date="2004-06" db="EMBL/GenBank/DDBJ databases">
        <title>Cloning of human full open reading frames in Gateway(TM) system entry vector (pDONR201).</title>
        <authorList>
            <person name="Ebert L."/>
            <person name="Schick M."/>
            <person name="Neubert P."/>
            <person name="Schatten R."/>
            <person name="Henze S."/>
            <person name="Korn B."/>
        </authorList>
    </citation>
    <scope>NUCLEOTIDE SEQUENCE [LARGE SCALE MRNA]</scope>
    <scope>VARIANTS THR-262; PRO-292 AND PRO-383</scope>
</reference>
<reference key="5">
    <citation type="journal article" date="2005" name="Nature">
        <title>Generation and annotation of the DNA sequences of human chromosomes 2 and 4.</title>
        <authorList>
            <person name="Hillier L.W."/>
            <person name="Graves T.A."/>
            <person name="Fulton R.S."/>
            <person name="Fulton L.A."/>
            <person name="Pepin K.H."/>
            <person name="Minx P."/>
            <person name="Wagner-McPherson C."/>
            <person name="Layman D."/>
            <person name="Wylie K."/>
            <person name="Sekhon M."/>
            <person name="Becker M.C."/>
            <person name="Fewell G.A."/>
            <person name="Delehaunty K.D."/>
            <person name="Miner T.L."/>
            <person name="Nash W.E."/>
            <person name="Kremitzki C."/>
            <person name="Oddy L."/>
            <person name="Du H."/>
            <person name="Sun H."/>
            <person name="Bradshaw-Cordum H."/>
            <person name="Ali J."/>
            <person name="Carter J."/>
            <person name="Cordes M."/>
            <person name="Harris A."/>
            <person name="Isak A."/>
            <person name="van Brunt A."/>
            <person name="Nguyen C."/>
            <person name="Du F."/>
            <person name="Courtney L."/>
            <person name="Kalicki J."/>
            <person name="Ozersky P."/>
            <person name="Abbott S."/>
            <person name="Armstrong J."/>
            <person name="Belter E.A."/>
            <person name="Caruso L."/>
            <person name="Cedroni M."/>
            <person name="Cotton M."/>
            <person name="Davidson T."/>
            <person name="Desai A."/>
            <person name="Elliott G."/>
            <person name="Erb T."/>
            <person name="Fronick C."/>
            <person name="Gaige T."/>
            <person name="Haakenson W."/>
            <person name="Haglund K."/>
            <person name="Holmes A."/>
            <person name="Harkins R."/>
            <person name="Kim K."/>
            <person name="Kruchowski S.S."/>
            <person name="Strong C.M."/>
            <person name="Grewal N."/>
            <person name="Goyea E."/>
            <person name="Hou S."/>
            <person name="Levy A."/>
            <person name="Martinka S."/>
            <person name="Mead K."/>
            <person name="McLellan M.D."/>
            <person name="Meyer R."/>
            <person name="Randall-Maher J."/>
            <person name="Tomlinson C."/>
            <person name="Dauphin-Kohlberg S."/>
            <person name="Kozlowicz-Reilly A."/>
            <person name="Shah N."/>
            <person name="Swearengen-Shahid S."/>
            <person name="Snider J."/>
            <person name="Strong J.T."/>
            <person name="Thompson J."/>
            <person name="Yoakum M."/>
            <person name="Leonard S."/>
            <person name="Pearman C."/>
            <person name="Trani L."/>
            <person name="Radionenko M."/>
            <person name="Waligorski J.E."/>
            <person name="Wang C."/>
            <person name="Rock S.M."/>
            <person name="Tin-Wollam A.-M."/>
            <person name="Maupin R."/>
            <person name="Latreille P."/>
            <person name="Wendl M.C."/>
            <person name="Yang S.-P."/>
            <person name="Pohl C."/>
            <person name="Wallis J.W."/>
            <person name="Spieth J."/>
            <person name="Bieri T.A."/>
            <person name="Berkowicz N."/>
            <person name="Nelson J.O."/>
            <person name="Osborne J."/>
            <person name="Ding L."/>
            <person name="Meyer R."/>
            <person name="Sabo A."/>
            <person name="Shotland Y."/>
            <person name="Sinha P."/>
            <person name="Wohldmann P.E."/>
            <person name="Cook L.L."/>
            <person name="Hickenbotham M.T."/>
            <person name="Eldred J."/>
            <person name="Williams D."/>
            <person name="Jones T.A."/>
            <person name="She X."/>
            <person name="Ciccarelli F.D."/>
            <person name="Izaurralde E."/>
            <person name="Taylor J."/>
            <person name="Schmutz J."/>
            <person name="Myers R.M."/>
            <person name="Cox D.R."/>
            <person name="Huang X."/>
            <person name="McPherson J.D."/>
            <person name="Mardis E.R."/>
            <person name="Clifton S.W."/>
            <person name="Warren W.C."/>
            <person name="Chinwalla A.T."/>
            <person name="Eddy S.R."/>
            <person name="Marra M.A."/>
            <person name="Ovcharenko I."/>
            <person name="Furey T.S."/>
            <person name="Miller W."/>
            <person name="Eichler E.E."/>
            <person name="Bork P."/>
            <person name="Suyama M."/>
            <person name="Torrents D."/>
            <person name="Waterston R.H."/>
            <person name="Wilson R.K."/>
        </authorList>
    </citation>
    <scope>NUCLEOTIDE SEQUENCE [LARGE SCALE GENOMIC DNA]</scope>
</reference>
<reference key="6">
    <citation type="journal article" date="2004" name="Genome Res.">
        <title>The status, quality, and expansion of the NIH full-length cDNA project: the Mammalian Gene Collection (MGC).</title>
        <authorList>
            <consortium name="The MGC Project Team"/>
        </authorList>
    </citation>
    <scope>NUCLEOTIDE SEQUENCE [LARGE SCALE MRNA]</scope>
    <scope>VARIANTS THR-262; PRO-292 AND PRO-383</scope>
    <source>
        <tissue>Colon</tissue>
        <tissue>Kidney</tissue>
    </source>
</reference>
<dbReference type="EMBL" id="AF151815">
    <property type="protein sequence ID" value="AAD34052.1"/>
    <property type="molecule type" value="mRNA"/>
</dbReference>
<dbReference type="EMBL" id="AY007160">
    <property type="protein sequence ID" value="AAG02008.1"/>
    <property type="molecule type" value="mRNA"/>
</dbReference>
<dbReference type="EMBL" id="AF070638">
    <property type="protein sequence ID" value="AAC25393.1"/>
    <property type="molecule type" value="mRNA"/>
</dbReference>
<dbReference type="EMBL" id="AK314975">
    <property type="protein sequence ID" value="BAG37474.1"/>
    <property type="molecule type" value="mRNA"/>
</dbReference>
<dbReference type="EMBL" id="CR457401">
    <property type="protein sequence ID" value="CAG33682.1"/>
    <property type="molecule type" value="mRNA"/>
</dbReference>
<dbReference type="EMBL" id="AC068946">
    <property type="status" value="NOT_ANNOTATED_CDS"/>
    <property type="molecule type" value="Genomic_DNA"/>
</dbReference>
<dbReference type="EMBL" id="BC001393">
    <property type="protein sequence ID" value="AAH01393.1"/>
    <property type="molecule type" value="mRNA"/>
</dbReference>
<dbReference type="EMBL" id="BC012821">
    <property type="protein sequence ID" value="AAH12821.1"/>
    <property type="molecule type" value="mRNA"/>
</dbReference>
<dbReference type="CCDS" id="CCDS2433.1"/>
<dbReference type="RefSeq" id="NP_001308318.2">
    <property type="nucleotide sequence ID" value="NM_001321389.2"/>
</dbReference>
<dbReference type="RefSeq" id="NP_001308319.2">
    <property type="nucleotide sequence ID" value="NM_001321390.2"/>
</dbReference>
<dbReference type="RefSeq" id="NP_001308320.2">
    <property type="nucleotide sequence ID" value="NM_001321391.2"/>
</dbReference>
<dbReference type="RefSeq" id="NP_056495.3">
    <property type="nucleotide sequence ID" value="NM_015680.5"/>
</dbReference>
<dbReference type="SMR" id="Q9BV87"/>
<dbReference type="BioGRID" id="117955">
    <property type="interactions" value="9"/>
</dbReference>
<dbReference type="FunCoup" id="Q9BV87">
    <property type="interactions" value="963"/>
</dbReference>
<dbReference type="IntAct" id="Q9BV87">
    <property type="interactions" value="7"/>
</dbReference>
<dbReference type="STRING" id="9606.ENSP00000386277"/>
<dbReference type="GlyGen" id="Q9BV87">
    <property type="glycosylation" value="1 site, 1 N-linked glycan (1 site)"/>
</dbReference>
<dbReference type="iPTMnet" id="Q9BV87"/>
<dbReference type="PhosphoSitePlus" id="Q9BV87"/>
<dbReference type="BioMuta" id="CNPPD1"/>
<dbReference type="DMDM" id="296434422"/>
<dbReference type="MassIVE" id="Q9BV87"/>
<dbReference type="PaxDb" id="9606-ENSP00000386277"/>
<dbReference type="PeptideAtlas" id="Q9BV87"/>
<dbReference type="ProteomicsDB" id="79182"/>
<dbReference type="Antibodypedia" id="47668">
    <property type="antibodies" value="63 antibodies from 16 providers"/>
</dbReference>
<dbReference type="DNASU" id="27013"/>
<dbReference type="Ensembl" id="ENST00000360507.10">
    <property type="protein sequence ID" value="ENSP00000353698.5"/>
    <property type="gene ID" value="ENSG00000115649.16"/>
</dbReference>
<dbReference type="Ensembl" id="ENST00000409789.5">
    <property type="protein sequence ID" value="ENSP00000386277.1"/>
    <property type="gene ID" value="ENSG00000115649.16"/>
</dbReference>
<dbReference type="GeneID" id="27013"/>
<dbReference type="KEGG" id="hsa:27013"/>
<dbReference type="MANE-Select" id="ENST00000360507.10">
    <property type="protein sequence ID" value="ENSP00000353698.5"/>
    <property type="RefSeq nucleotide sequence ID" value="NM_015680.6"/>
    <property type="RefSeq protein sequence ID" value="NP_056495.4"/>
</dbReference>
<dbReference type="UCSC" id="uc002vju.5">
    <property type="organism name" value="human"/>
</dbReference>
<dbReference type="AGR" id="HGNC:25220"/>
<dbReference type="CTD" id="27013"/>
<dbReference type="DisGeNET" id="27013"/>
<dbReference type="GeneCards" id="CNPPD1"/>
<dbReference type="HGNC" id="HGNC:25220">
    <property type="gene designation" value="CNPPD1"/>
</dbReference>
<dbReference type="HPA" id="ENSG00000115649">
    <property type="expression patterns" value="Low tissue specificity"/>
</dbReference>
<dbReference type="neXtProt" id="NX_Q9BV87"/>
<dbReference type="OpenTargets" id="ENSG00000115649"/>
<dbReference type="PharmGKB" id="PA134874121"/>
<dbReference type="VEuPathDB" id="HostDB:ENSG00000115649"/>
<dbReference type="eggNOG" id="KOG1674">
    <property type="taxonomic scope" value="Eukaryota"/>
</dbReference>
<dbReference type="GeneTree" id="ENSGT00390000000862"/>
<dbReference type="HOGENOM" id="CLU_051510_0_0_1"/>
<dbReference type="InParanoid" id="Q9BV87"/>
<dbReference type="OMA" id="SPWYHTH"/>
<dbReference type="OrthoDB" id="244495at2759"/>
<dbReference type="PAN-GO" id="Q9BV87">
    <property type="GO annotations" value="4 GO annotations based on evolutionary models"/>
</dbReference>
<dbReference type="PhylomeDB" id="Q9BV87"/>
<dbReference type="TreeFam" id="TF105853"/>
<dbReference type="PathwayCommons" id="Q9BV87"/>
<dbReference type="SignaLink" id="Q9BV87"/>
<dbReference type="BioGRID-ORCS" id="27013">
    <property type="hits" value="12 hits in 1157 CRISPR screens"/>
</dbReference>
<dbReference type="ChiTaRS" id="CNPPD1">
    <property type="organism name" value="human"/>
</dbReference>
<dbReference type="GenomeRNAi" id="27013"/>
<dbReference type="Pharos" id="Q9BV87">
    <property type="development level" value="Tdark"/>
</dbReference>
<dbReference type="PRO" id="PR:Q9BV87"/>
<dbReference type="Proteomes" id="UP000005640">
    <property type="component" value="Chromosome 2"/>
</dbReference>
<dbReference type="RNAct" id="Q9BV87">
    <property type="molecule type" value="protein"/>
</dbReference>
<dbReference type="Bgee" id="ENSG00000115649">
    <property type="expression patterns" value="Expressed in mucosa of transverse colon and 203 other cell types or tissues"/>
</dbReference>
<dbReference type="ExpressionAtlas" id="Q9BV87">
    <property type="expression patterns" value="baseline and differential"/>
</dbReference>
<dbReference type="GO" id="GO:0000307">
    <property type="term" value="C:cyclin-dependent protein kinase holoenzyme complex"/>
    <property type="evidence" value="ECO:0000318"/>
    <property type="project" value="GO_Central"/>
</dbReference>
<dbReference type="GO" id="GO:0016020">
    <property type="term" value="C:membrane"/>
    <property type="evidence" value="ECO:0007669"/>
    <property type="project" value="UniProtKB-SubCell"/>
</dbReference>
<dbReference type="GO" id="GO:0005634">
    <property type="term" value="C:nucleus"/>
    <property type="evidence" value="ECO:0000318"/>
    <property type="project" value="GO_Central"/>
</dbReference>
<dbReference type="GO" id="GO:0016538">
    <property type="term" value="F:cyclin-dependent protein serine/threonine kinase regulator activity"/>
    <property type="evidence" value="ECO:0000318"/>
    <property type="project" value="GO_Central"/>
</dbReference>
<dbReference type="GO" id="GO:0019901">
    <property type="term" value="F:protein kinase binding"/>
    <property type="evidence" value="ECO:0007669"/>
    <property type="project" value="InterPro"/>
</dbReference>
<dbReference type="CDD" id="cd20557">
    <property type="entry name" value="CYCLIN_ScPCL1-like"/>
    <property type="match status" value="1"/>
</dbReference>
<dbReference type="Gene3D" id="1.10.472.10">
    <property type="entry name" value="Cyclin-like"/>
    <property type="match status" value="1"/>
</dbReference>
<dbReference type="InterPro" id="IPR013922">
    <property type="entry name" value="Cyclin_PHO80-like"/>
</dbReference>
<dbReference type="PANTHER" id="PTHR15615">
    <property type="match status" value="1"/>
</dbReference>
<dbReference type="PANTHER" id="PTHR15615:SF108">
    <property type="entry name" value="PROTEIN CNPPD1"/>
    <property type="match status" value="1"/>
</dbReference>
<dbReference type="Pfam" id="PF08613">
    <property type="entry name" value="Cyclin"/>
    <property type="match status" value="1"/>
</dbReference>
<feature type="chain" id="PRO_0000089352" description="Protein CNPPD1">
    <location>
        <begin position="1"/>
        <end position="410"/>
    </location>
</feature>
<feature type="transmembrane region" description="Helical" evidence="1">
    <location>
        <begin position="233"/>
        <end position="253"/>
    </location>
</feature>
<feature type="sequence variant" id="VAR_022825" description="In dbSNP:rs1043160." evidence="2 3 4 6">
    <original>I</original>
    <variation>T</variation>
    <location>
        <position position="262"/>
    </location>
</feature>
<feature type="sequence variant" id="VAR_024298" description="In dbSNP:rs1127102." evidence="2 3 4 6">
    <original>L</original>
    <variation>P</variation>
    <location>
        <position position="292"/>
    </location>
</feature>
<feature type="sequence variant" id="VAR_056769" description="In dbSNP:rs1043161.">
    <original>R</original>
    <variation>T</variation>
    <location>
        <position position="344"/>
    </location>
</feature>
<feature type="sequence variant" id="VAR_024299" description="In dbSNP:rs17655123.">
    <original>P</original>
    <variation>L</variation>
    <location>
        <position position="366"/>
    </location>
</feature>
<feature type="sequence variant" id="VAR_024300" description="In dbSNP:rs4674361." evidence="2 3 4 5 6">
    <original>L</original>
    <variation>P</variation>
    <location>
        <position position="383"/>
    </location>
</feature>
<feature type="sequence conflict" description="In Ref. 1; AAD34052." evidence="7" ref="1">
    <original>R</original>
    <variation>G</variation>
    <location>
        <position position="38"/>
    </location>
</feature>
<comment type="subcellular location">
    <subcellularLocation>
        <location evidence="7">Membrane</location>
        <topology evidence="7">Single-pass membrane protein</topology>
    </subcellularLocation>
</comment>
<comment type="similarity">
    <text evidence="7">Belongs to the CNPPD1 family.</text>
</comment>
<sequence length="410" mass="45456">MDLTGLLLDEEGTFSLAGFQDFTFLPGHQKLSARIRRRLYYGWDWEADCSLEELSSPVADIAVELLQKAAPSPIRRLQKKYVAHVSREACISPCAMMLALVYIERLRHRNPDYLQHVSSSDLFLISMMVASKYLYDEGEEEEVFNDEWGAAGGVAVPTLNALERGFLSAMDWHLYTDPREIFEVLSWLESCVAEQQGRWRGWYTYTDLCVLLEQPTWQLALGSLCQRLVKLSCLLAVAYVSSVALAVASVAVIHQSLGLSCIPTPGPPDLGLTSRCLLEPCIPSVPQCLPSLANVSSCLEGSMGLRSLWGSLLASLTPPPLPPPDPPAPPTLLHNCHLCQKLQRDSPTCHACLHPNRTVPTALSSPWYHTYGLAPPWPWSPVLLSLPQPQQCSLFSVMELARLKSFVFPG</sequence>
<protein>
    <recommendedName>
        <fullName>Protein CNPPD1</fullName>
    </recommendedName>
    <alternativeName>
        <fullName>Cyclin Pas1/PHO80 domain-containing protein 1</fullName>
    </alternativeName>
</protein>